<keyword id="KW-0067">ATP-binding</keyword>
<keyword id="KW-0460">Magnesium</keyword>
<keyword id="KW-0547">Nucleotide-binding</keyword>
<keyword id="KW-0808">Transferase</keyword>
<keyword id="KW-0819">tRNA processing</keyword>
<feature type="chain" id="PRO_1000098653" description="tRNA dimethylallyltransferase">
    <location>
        <begin position="1"/>
        <end position="307"/>
    </location>
</feature>
<feature type="binding site" evidence="1">
    <location>
        <begin position="9"/>
        <end position="16"/>
    </location>
    <ligand>
        <name>ATP</name>
        <dbReference type="ChEBI" id="CHEBI:30616"/>
    </ligand>
</feature>
<feature type="binding site" evidence="1">
    <location>
        <begin position="11"/>
        <end position="16"/>
    </location>
    <ligand>
        <name>substrate</name>
    </ligand>
</feature>
<feature type="site" description="Interaction with substrate tRNA" evidence="1">
    <location>
        <position position="105"/>
    </location>
</feature>
<feature type="site" description="Interaction with substrate tRNA" evidence="1">
    <location>
        <position position="126"/>
    </location>
</feature>
<organism>
    <name type="scientific">Clavibacter sepedonicus</name>
    <name type="common">Clavibacter michiganensis subsp. sepedonicus</name>
    <dbReference type="NCBI Taxonomy" id="31964"/>
    <lineage>
        <taxon>Bacteria</taxon>
        <taxon>Bacillati</taxon>
        <taxon>Actinomycetota</taxon>
        <taxon>Actinomycetes</taxon>
        <taxon>Micrococcales</taxon>
        <taxon>Microbacteriaceae</taxon>
        <taxon>Clavibacter</taxon>
    </lineage>
</organism>
<comment type="function">
    <text evidence="1">Catalyzes the transfer of a dimethylallyl group onto the adenine at position 37 in tRNAs that read codons beginning with uridine, leading to the formation of N6-(dimethylallyl)adenosine (i(6)A).</text>
</comment>
<comment type="catalytic activity">
    <reaction evidence="1">
        <text>adenosine(37) in tRNA + dimethylallyl diphosphate = N(6)-dimethylallyladenosine(37) in tRNA + diphosphate</text>
        <dbReference type="Rhea" id="RHEA:26482"/>
        <dbReference type="Rhea" id="RHEA-COMP:10162"/>
        <dbReference type="Rhea" id="RHEA-COMP:10375"/>
        <dbReference type="ChEBI" id="CHEBI:33019"/>
        <dbReference type="ChEBI" id="CHEBI:57623"/>
        <dbReference type="ChEBI" id="CHEBI:74411"/>
        <dbReference type="ChEBI" id="CHEBI:74415"/>
        <dbReference type="EC" id="2.5.1.75"/>
    </reaction>
</comment>
<comment type="cofactor">
    <cofactor evidence="1">
        <name>Mg(2+)</name>
        <dbReference type="ChEBI" id="CHEBI:18420"/>
    </cofactor>
</comment>
<comment type="subunit">
    <text evidence="1">Monomer.</text>
</comment>
<comment type="similarity">
    <text evidence="1">Belongs to the IPP transferase family.</text>
</comment>
<dbReference type="EC" id="2.5.1.75" evidence="1"/>
<dbReference type="EMBL" id="AM849034">
    <property type="protein sequence ID" value="CAQ01326.1"/>
    <property type="molecule type" value="Genomic_DNA"/>
</dbReference>
<dbReference type="RefSeq" id="WP_012298604.1">
    <property type="nucleotide sequence ID" value="NZ_MZMN01000003.1"/>
</dbReference>
<dbReference type="SMR" id="B0RGZ2"/>
<dbReference type="STRING" id="31964.CMS1211"/>
<dbReference type="KEGG" id="cms:CMS1211"/>
<dbReference type="eggNOG" id="COG0324">
    <property type="taxonomic scope" value="Bacteria"/>
</dbReference>
<dbReference type="HOGENOM" id="CLU_032616_0_1_11"/>
<dbReference type="OrthoDB" id="9776390at2"/>
<dbReference type="Proteomes" id="UP000001318">
    <property type="component" value="Chromosome"/>
</dbReference>
<dbReference type="GO" id="GO:0005524">
    <property type="term" value="F:ATP binding"/>
    <property type="evidence" value="ECO:0007669"/>
    <property type="project" value="UniProtKB-UniRule"/>
</dbReference>
<dbReference type="GO" id="GO:0052381">
    <property type="term" value="F:tRNA dimethylallyltransferase activity"/>
    <property type="evidence" value="ECO:0007669"/>
    <property type="project" value="UniProtKB-UniRule"/>
</dbReference>
<dbReference type="GO" id="GO:0006400">
    <property type="term" value="P:tRNA modification"/>
    <property type="evidence" value="ECO:0007669"/>
    <property type="project" value="TreeGrafter"/>
</dbReference>
<dbReference type="FunFam" id="1.10.20.140:FF:000001">
    <property type="entry name" value="tRNA dimethylallyltransferase"/>
    <property type="match status" value="1"/>
</dbReference>
<dbReference type="Gene3D" id="1.10.20.140">
    <property type="match status" value="1"/>
</dbReference>
<dbReference type="Gene3D" id="3.40.50.300">
    <property type="entry name" value="P-loop containing nucleotide triphosphate hydrolases"/>
    <property type="match status" value="1"/>
</dbReference>
<dbReference type="HAMAP" id="MF_00185">
    <property type="entry name" value="IPP_trans"/>
    <property type="match status" value="1"/>
</dbReference>
<dbReference type="InterPro" id="IPR039657">
    <property type="entry name" value="Dimethylallyltransferase"/>
</dbReference>
<dbReference type="InterPro" id="IPR018022">
    <property type="entry name" value="IPT"/>
</dbReference>
<dbReference type="InterPro" id="IPR027417">
    <property type="entry name" value="P-loop_NTPase"/>
</dbReference>
<dbReference type="NCBIfam" id="TIGR00174">
    <property type="entry name" value="miaA"/>
    <property type="match status" value="1"/>
</dbReference>
<dbReference type="PANTHER" id="PTHR11088">
    <property type="entry name" value="TRNA DIMETHYLALLYLTRANSFERASE"/>
    <property type="match status" value="1"/>
</dbReference>
<dbReference type="PANTHER" id="PTHR11088:SF60">
    <property type="entry name" value="TRNA DIMETHYLALLYLTRANSFERASE"/>
    <property type="match status" value="1"/>
</dbReference>
<dbReference type="Pfam" id="PF01715">
    <property type="entry name" value="IPPT"/>
    <property type="match status" value="1"/>
</dbReference>
<dbReference type="SUPFAM" id="SSF52540">
    <property type="entry name" value="P-loop containing nucleoside triphosphate hydrolases"/>
    <property type="match status" value="1"/>
</dbReference>
<name>MIAA_CLASE</name>
<proteinExistence type="inferred from homology"/>
<protein>
    <recommendedName>
        <fullName evidence="1">tRNA dimethylallyltransferase</fullName>
        <ecNumber evidence="1">2.5.1.75</ecNumber>
    </recommendedName>
    <alternativeName>
        <fullName evidence="1">Dimethylallyl diphosphate:tRNA dimethylallyltransferase</fullName>
        <shortName evidence="1">DMAPP:tRNA dimethylallyltransferase</shortName>
        <shortName evidence="1">DMATase</shortName>
    </alternativeName>
    <alternativeName>
        <fullName evidence="1">Isopentenyl-diphosphate:tRNA isopentenyltransferase</fullName>
        <shortName evidence="1">IPP transferase</shortName>
        <shortName evidence="1">IPPT</shortName>
        <shortName evidence="1">IPTase</shortName>
    </alternativeName>
</protein>
<reference key="1">
    <citation type="journal article" date="2008" name="J. Bacteriol.">
        <title>Genome of the actinomycete plant pathogen Clavibacter michiganensis subsp. sepedonicus suggests recent niche adaptation.</title>
        <authorList>
            <person name="Bentley S.D."/>
            <person name="Corton C."/>
            <person name="Brown S.E."/>
            <person name="Barron A."/>
            <person name="Clark L."/>
            <person name="Doggett J."/>
            <person name="Harris B."/>
            <person name="Ormond D."/>
            <person name="Quail M.A."/>
            <person name="May G."/>
            <person name="Francis D."/>
            <person name="Knudson D."/>
            <person name="Parkhill J."/>
            <person name="Ishimaru C.A."/>
        </authorList>
    </citation>
    <scope>NUCLEOTIDE SEQUENCE [LARGE SCALE GENOMIC DNA]</scope>
    <source>
        <strain>ATCC 33113 / DSM 20744 / JCM 9667 / LMG 2889 / ICMP 2535 / C-1</strain>
    </source>
</reference>
<accession>B0RGZ2</accession>
<sequence>MTPIVAVVGATGTGKSALSLDIAERLRAEGRAAEIVNADAMQLYRGMDIGTAKLPEVGRRGVPHHMLDVLDVTAEATVAAYQEEARRAIGGILERGAVPILVGGSGLYVSSVLFDYDFPGTDPEIRQRLERELEATGPGMIHRRLRELDPVAAQRIGAHNGRRLVRALEVVEITGPQPERATAEPRPWHPARILALTLPREELVPRLDARVSGMWRDGLVDEVAGLLSAGLADGVTASRAIGYAQAARQLAGELSEEEAMEETRALTRRYARRQVSWFGRYADAVRLDARDDRLLEHALDALPAARP</sequence>
<gene>
    <name evidence="1" type="primary">miaA</name>
    <name type="ordered locus">CMS1211</name>
</gene>
<evidence type="ECO:0000255" key="1">
    <source>
        <dbReference type="HAMAP-Rule" id="MF_00185"/>
    </source>
</evidence>